<organism>
    <name type="scientific">Limosilactobacillus reuteri (strain DSM 20016)</name>
    <name type="common">Lactobacillus reuteri</name>
    <dbReference type="NCBI Taxonomy" id="557436"/>
    <lineage>
        <taxon>Bacteria</taxon>
        <taxon>Bacillati</taxon>
        <taxon>Bacillota</taxon>
        <taxon>Bacilli</taxon>
        <taxon>Lactobacillales</taxon>
        <taxon>Lactobacillaceae</taxon>
        <taxon>Limosilactobacillus</taxon>
    </lineage>
</organism>
<feature type="chain" id="PRO_1000057355" description="Elongation factor Ts">
    <location>
        <begin position="1"/>
        <end position="291"/>
    </location>
</feature>
<feature type="region of interest" description="Involved in Mg(2+) ion dislocation from EF-Tu" evidence="1">
    <location>
        <begin position="80"/>
        <end position="83"/>
    </location>
</feature>
<protein>
    <recommendedName>
        <fullName evidence="1">Elongation factor Ts</fullName>
        <shortName evidence="1">EF-Ts</shortName>
    </recommendedName>
</protein>
<keyword id="KW-0963">Cytoplasm</keyword>
<keyword id="KW-0251">Elongation factor</keyword>
<keyword id="KW-0648">Protein biosynthesis</keyword>
<keyword id="KW-1185">Reference proteome</keyword>
<dbReference type="EMBL" id="CP000705">
    <property type="protein sequence ID" value="ABQ82950.1"/>
    <property type="molecule type" value="Genomic_DNA"/>
</dbReference>
<dbReference type="RefSeq" id="WP_003666861.1">
    <property type="nucleotide sequence ID" value="NZ_AZDD01000002.1"/>
</dbReference>
<dbReference type="SMR" id="A5VJC6"/>
<dbReference type="STRING" id="557436.Lreu_0685"/>
<dbReference type="KEGG" id="lre:Lreu_0685"/>
<dbReference type="PATRIC" id="fig|557436.17.peg.758"/>
<dbReference type="eggNOG" id="COG0264">
    <property type="taxonomic scope" value="Bacteria"/>
</dbReference>
<dbReference type="HOGENOM" id="CLU_047155_0_2_9"/>
<dbReference type="Proteomes" id="UP000001991">
    <property type="component" value="Chromosome"/>
</dbReference>
<dbReference type="GO" id="GO:0005737">
    <property type="term" value="C:cytoplasm"/>
    <property type="evidence" value="ECO:0007669"/>
    <property type="project" value="UniProtKB-SubCell"/>
</dbReference>
<dbReference type="GO" id="GO:0003746">
    <property type="term" value="F:translation elongation factor activity"/>
    <property type="evidence" value="ECO:0007669"/>
    <property type="project" value="UniProtKB-UniRule"/>
</dbReference>
<dbReference type="CDD" id="cd14275">
    <property type="entry name" value="UBA_EF-Ts"/>
    <property type="match status" value="1"/>
</dbReference>
<dbReference type="FunFam" id="1.10.286.20:FF:000001">
    <property type="entry name" value="Elongation factor Ts"/>
    <property type="match status" value="1"/>
</dbReference>
<dbReference type="FunFam" id="1.10.8.10:FF:000001">
    <property type="entry name" value="Elongation factor Ts"/>
    <property type="match status" value="1"/>
</dbReference>
<dbReference type="Gene3D" id="1.10.286.20">
    <property type="match status" value="1"/>
</dbReference>
<dbReference type="Gene3D" id="1.10.8.10">
    <property type="entry name" value="DNA helicase RuvA subunit, C-terminal domain"/>
    <property type="match status" value="1"/>
</dbReference>
<dbReference type="Gene3D" id="3.30.479.20">
    <property type="entry name" value="Elongation factor Ts, dimerisation domain"/>
    <property type="match status" value="2"/>
</dbReference>
<dbReference type="HAMAP" id="MF_00050">
    <property type="entry name" value="EF_Ts"/>
    <property type="match status" value="1"/>
</dbReference>
<dbReference type="InterPro" id="IPR036402">
    <property type="entry name" value="EF-Ts_dimer_sf"/>
</dbReference>
<dbReference type="InterPro" id="IPR001816">
    <property type="entry name" value="Transl_elong_EFTs/EF1B"/>
</dbReference>
<dbReference type="InterPro" id="IPR014039">
    <property type="entry name" value="Transl_elong_EFTs/EF1B_dimer"/>
</dbReference>
<dbReference type="InterPro" id="IPR018101">
    <property type="entry name" value="Transl_elong_Ts_CS"/>
</dbReference>
<dbReference type="InterPro" id="IPR009060">
    <property type="entry name" value="UBA-like_sf"/>
</dbReference>
<dbReference type="NCBIfam" id="TIGR00116">
    <property type="entry name" value="tsf"/>
    <property type="match status" value="1"/>
</dbReference>
<dbReference type="PANTHER" id="PTHR11741">
    <property type="entry name" value="ELONGATION FACTOR TS"/>
    <property type="match status" value="1"/>
</dbReference>
<dbReference type="PANTHER" id="PTHR11741:SF0">
    <property type="entry name" value="ELONGATION FACTOR TS, MITOCHONDRIAL"/>
    <property type="match status" value="1"/>
</dbReference>
<dbReference type="Pfam" id="PF00889">
    <property type="entry name" value="EF_TS"/>
    <property type="match status" value="1"/>
</dbReference>
<dbReference type="SUPFAM" id="SSF54713">
    <property type="entry name" value="Elongation factor Ts (EF-Ts), dimerisation domain"/>
    <property type="match status" value="2"/>
</dbReference>
<dbReference type="SUPFAM" id="SSF46934">
    <property type="entry name" value="UBA-like"/>
    <property type="match status" value="1"/>
</dbReference>
<dbReference type="PROSITE" id="PS01126">
    <property type="entry name" value="EF_TS_1"/>
    <property type="match status" value="1"/>
</dbReference>
<dbReference type="PROSITE" id="PS01127">
    <property type="entry name" value="EF_TS_2"/>
    <property type="match status" value="1"/>
</dbReference>
<evidence type="ECO:0000255" key="1">
    <source>
        <dbReference type="HAMAP-Rule" id="MF_00050"/>
    </source>
</evidence>
<accession>A5VJC6</accession>
<gene>
    <name evidence="1" type="primary">tsf</name>
    <name type="ordered locus">Lreu_0685</name>
</gene>
<comment type="function">
    <text evidence="1">Associates with the EF-Tu.GDP complex and induces the exchange of GDP to GTP. It remains bound to the aminoacyl-tRNA.EF-Tu.GTP complex up to the GTP hydrolysis stage on the ribosome.</text>
</comment>
<comment type="subcellular location">
    <subcellularLocation>
        <location evidence="1">Cytoplasm</location>
    </subcellularLocation>
</comment>
<comment type="similarity">
    <text evidence="1">Belongs to the EF-Ts family.</text>
</comment>
<reference key="1">
    <citation type="journal article" date="2011" name="PLoS Genet.">
        <title>The evolution of host specialization in the vertebrate gut symbiont Lactobacillus reuteri.</title>
        <authorList>
            <person name="Frese S.A."/>
            <person name="Benson A.K."/>
            <person name="Tannock G.W."/>
            <person name="Loach D.M."/>
            <person name="Kim J."/>
            <person name="Zhang M."/>
            <person name="Oh P.L."/>
            <person name="Heng N.C."/>
            <person name="Patil P.B."/>
            <person name="Juge N."/>
            <person name="Mackenzie D.A."/>
            <person name="Pearson B.M."/>
            <person name="Lapidus A."/>
            <person name="Dalin E."/>
            <person name="Tice H."/>
            <person name="Goltsman E."/>
            <person name="Land M."/>
            <person name="Hauser L."/>
            <person name="Ivanova N."/>
            <person name="Kyrpides N.C."/>
            <person name="Walter J."/>
        </authorList>
    </citation>
    <scope>NUCLEOTIDE SEQUENCE [LARGE SCALE GENOMIC DNA]</scope>
    <source>
        <strain>DSM 20016</strain>
    </source>
</reference>
<sequence>MAEIKAAQVMQLRKKSGAGIMDAKKALVASDGDMDKAMDYLREKGIAKAAKKSDRVAAEGLADIAVNGNTAAIVELNSETDFVAASEPFKDLLKKVTKLISENKPANVEEALEIKTENGTLNDDIISTTQKTGEKVSLRRFTVVEKDDGDSFGAYLHQGGQIAALVVLEGADDATAKDVAMHVAAINPEFMTRDDVSQERLDHERAIFKEETLNEGKPEKIVDKIVEGRLNKFLSQICLADQDFVKDSDQTVEQYVSSKNGKLKSFIRYEVGEGIEKKQDDFAQEVKDQMN</sequence>
<name>EFTS_LIMRD</name>
<proteinExistence type="inferred from homology"/>